<gene>
    <name type="primary">cas3'</name>
    <name type="synonym">cas3''</name>
    <name type="ordered locus">TTX_1254</name>
</gene>
<organism>
    <name type="scientific">Thermoproteus tenax (strain ATCC 35583 / DSM 2078 / JCM 9277 / NBRC 100435 / Kra 1)</name>
    <dbReference type="NCBI Taxonomy" id="768679"/>
    <lineage>
        <taxon>Archaea</taxon>
        <taxon>Thermoproteota</taxon>
        <taxon>Thermoprotei</taxon>
        <taxon>Thermoproteales</taxon>
        <taxon>Thermoproteaceae</taxon>
        <taxon>Thermoproteus</taxon>
    </lineage>
</organism>
<dbReference type="EC" id="3.1.-.-"/>
<dbReference type="EMBL" id="FN869859">
    <property type="protein sequence ID" value="CCC81889.1"/>
    <property type="molecule type" value="Genomic_DNA"/>
</dbReference>
<dbReference type="RefSeq" id="WP_014127144.1">
    <property type="nucleotide sequence ID" value="NC_016070.1"/>
</dbReference>
<dbReference type="SMR" id="G4RJZ4"/>
<dbReference type="STRING" id="768679.TTX_1254"/>
<dbReference type="PaxDb" id="768679-TTX_1254"/>
<dbReference type="GeneID" id="11262134"/>
<dbReference type="KEGG" id="ttn:TTX_1254"/>
<dbReference type="PATRIC" id="fig|768679.9.peg.1267"/>
<dbReference type="eggNOG" id="arCOG01442">
    <property type="taxonomic scope" value="Archaea"/>
</dbReference>
<dbReference type="HOGENOM" id="CLU_1076128_0_0_2"/>
<dbReference type="OrthoDB" id="38882at2157"/>
<dbReference type="Proteomes" id="UP000002654">
    <property type="component" value="Chromosome"/>
</dbReference>
<dbReference type="GO" id="GO:0046872">
    <property type="term" value="F:metal ion binding"/>
    <property type="evidence" value="ECO:0007669"/>
    <property type="project" value="UniProtKB-KW"/>
</dbReference>
<dbReference type="GO" id="GO:0004518">
    <property type="term" value="F:nuclease activity"/>
    <property type="evidence" value="ECO:0007669"/>
    <property type="project" value="UniProtKB-KW"/>
</dbReference>
<dbReference type="GO" id="GO:0051607">
    <property type="term" value="P:defense response to virus"/>
    <property type="evidence" value="ECO:0007669"/>
    <property type="project" value="UniProtKB-KW"/>
</dbReference>
<dbReference type="Gene3D" id="1.10.3210.30">
    <property type="match status" value="1"/>
</dbReference>
<dbReference type="InterPro" id="IPR006483">
    <property type="entry name" value="CRISPR-assoc_Cas3_HD"/>
</dbReference>
<dbReference type="InterPro" id="IPR038257">
    <property type="entry name" value="CRISPR-assoc_Cas3_HD_sf"/>
</dbReference>
<dbReference type="NCBIfam" id="TIGR01596">
    <property type="entry name" value="cas3_HD"/>
    <property type="match status" value="1"/>
</dbReference>
<dbReference type="SUPFAM" id="SSF109604">
    <property type="entry name" value="HD-domain/PDEase-like"/>
    <property type="match status" value="1"/>
</dbReference>
<dbReference type="PROSITE" id="PS51643">
    <property type="entry name" value="HD_CAS3"/>
    <property type="match status" value="1"/>
</dbReference>
<comment type="function">
    <text evidence="1">CRISPR (clustered regularly interspaced short palindromic repeat), is an adaptive immune system that provides protection against mobile genetic elements (viruses, transposable elements and conjugative plasmids). CRISPR clusters contain sequences complementary to antecedent mobile elements and target invading nucleic acids. CRISPR clusters are transcribed and processed into CRISPR RNA (crRNA). Cas3 plus Cascade participate in CRISPR interference, the third stage of CRISPR immunity. Acts as a ssDNA and ssRNA nuclease, probably with both exo- and endonuclease activities. Activity is higher for DNA than RNA (By similarity).</text>
</comment>
<comment type="cofactor">
    <cofactor evidence="1">
        <name>Mg(2+)</name>
        <dbReference type="ChEBI" id="CHEBI:18420"/>
    </cofactor>
</comment>
<comment type="subunit">
    <text evidence="1 3">Monomer (By similarity). Can form a Cascade complex with Csa5, Cas7, Cas5a, Cas3 and Cas8a2.</text>
</comment>
<comment type="induction">
    <text evidence="3">Repressed by 5 J/m2 ultraviolet light and 50 mM NaCl, slightly induced by 20 J/m2 ultraviolet light, 100 and 150 mM Nacl. Member of the csa5-cas7-cas5a-cas3-cas3'-cas8a2 operon.</text>
</comment>
<comment type="domain">
    <text>Proteins of this family have an N-terminal nuclease domain and a C-terminal helicase/ATPase domain. In some CRISPR/Cas systems the domains are swapped, in others they are encoded separately.</text>
</comment>
<comment type="similarity">
    <text evidence="4">Belongs to the CRISPR-associated nuclease Cas3-HD family.</text>
</comment>
<keyword id="KW-0051">Antiviral defense</keyword>
<keyword id="KW-0378">Hydrolase</keyword>
<keyword id="KW-0460">Magnesium</keyword>
<keyword id="KW-0479">Metal-binding</keyword>
<keyword id="KW-0540">Nuclease</keyword>
<keyword id="KW-1185">Reference proteome</keyword>
<reference key="1">
    <citation type="journal article" date="2011" name="PLoS ONE">
        <title>The complete genome sequence of Thermoproteus tenax: a physiologically versatile member of the Crenarchaeota.</title>
        <authorList>
            <person name="Siebers B."/>
            <person name="Zaparty M."/>
            <person name="Raddatz G."/>
            <person name="Tjaden B."/>
            <person name="Albers S.V."/>
            <person name="Bell S.D."/>
            <person name="Blombach F."/>
            <person name="Kletzin A."/>
            <person name="Kyrpides N."/>
            <person name="Lanz C."/>
            <person name="Plagens A."/>
            <person name="Rampp M."/>
            <person name="Rosinus A."/>
            <person name="von Jan M."/>
            <person name="Makarova K.S."/>
            <person name="Klenk H.P."/>
            <person name="Schuster S.C."/>
            <person name="Hensel R."/>
        </authorList>
    </citation>
    <scope>NUCLEOTIDE SEQUENCE [LARGE SCALE GENOMIC DNA]</scope>
    <source>
        <strain>ATCC 35583 / DSM 2078 / JCM 9277 / NBRC 100435 / Kra 1</strain>
    </source>
</reference>
<reference key="2">
    <citation type="journal article" date="2012" name="J. Bacteriol.">
        <title>Characterization of the CRISPR/Cas subtype I-A system of the hyperthermophilic crenarchaeon Thermoproteus tenax.</title>
        <authorList>
            <person name="Plagens A."/>
            <person name="Tjaden B."/>
            <person name="Hagemann A."/>
            <person name="Randau L."/>
            <person name="Hensel R."/>
        </authorList>
    </citation>
    <scope>SUBUNIT</scope>
    <scope>INDUCTION</scope>
    <scope>OPERON STRUCTURE</scope>
    <source>
        <strain>ATCC 35583 / DSM 2078 / JCM 9277 / NBRC 100435 / Kra 1</strain>
    </source>
</reference>
<sequence>MSCCAYFRGRDCLQTYEDHITQALEACERLRPYYGRWMEKAFGTADAAALAVEFHDLGKLAKAYIAGNRARYRHEVLGAYFALKTLQTEARYYVAAAVALHHEPMILAAYAGELGERAIHVSTLRAMLKDSDLSLGCTPNYSYRPEVAAALREWASRPPTADDVADAFQELAVYLSGGAPEEARVKRLRVAGLLHVLTVCDNWGARGRPGEGTFISRYMTVSELGL</sequence>
<protein>
    <recommendedName>
        <fullName>CRISPR-associated endonuclease Cas3-HD</fullName>
        <ecNumber>3.1.-.-</ecNumber>
    </recommendedName>
    <alternativeName>
        <fullName>CRISPR-associated ssDNA/ssRNA endonuclease Cas3-HD</fullName>
    </alternativeName>
</protein>
<feature type="chain" id="PRO_0000422228" description="CRISPR-associated endonuclease Cas3-HD">
    <location>
        <begin position="1"/>
        <end position="226"/>
    </location>
</feature>
<feature type="domain" description="HD Cas3-type" evidence="2">
    <location>
        <begin position="9"/>
        <end position="204"/>
    </location>
</feature>
<feature type="binding site" evidence="1">
    <location>
        <position position="56"/>
    </location>
    <ligand>
        <name>Mg(2+)</name>
        <dbReference type="ChEBI" id="CHEBI:18420"/>
        <note>catalytic</note>
    </ligand>
</feature>
<feature type="binding site" evidence="1">
    <location>
        <position position="74"/>
    </location>
    <ligand>
        <name>Mg(2+)</name>
        <dbReference type="ChEBI" id="CHEBI:18420"/>
        <note>catalytic</note>
    </ligand>
</feature>
<feature type="binding site" evidence="1">
    <location>
        <position position="101"/>
    </location>
    <ligand>
        <name>Mg(2+)</name>
        <dbReference type="ChEBI" id="CHEBI:18420"/>
        <note>catalytic</note>
    </ligand>
</feature>
<feature type="binding site" evidence="1">
    <location>
        <position position="102"/>
    </location>
    <ligand>
        <name>Mg(2+)</name>
        <dbReference type="ChEBI" id="CHEBI:18420"/>
        <note>catalytic</note>
    </ligand>
</feature>
<evidence type="ECO:0000250" key="1"/>
<evidence type="ECO:0000255" key="2">
    <source>
        <dbReference type="PROSITE-ProRule" id="PRU00974"/>
    </source>
</evidence>
<evidence type="ECO:0000269" key="3">
    <source>
    </source>
</evidence>
<evidence type="ECO:0000305" key="4"/>
<name>CS3HD_THETK</name>
<accession>G4RJZ4</accession>
<proteinExistence type="evidence at protein level"/>